<evidence type="ECO:0000250" key="1"/>
<evidence type="ECO:0000255" key="2"/>
<evidence type="ECO:0000256" key="3">
    <source>
        <dbReference type="SAM" id="MobiDB-lite"/>
    </source>
</evidence>
<evidence type="ECO:0000269" key="4">
    <source>
    </source>
</evidence>
<evidence type="ECO:0000269" key="5">
    <source>
    </source>
</evidence>
<evidence type="ECO:0000269" key="6">
    <source>
    </source>
</evidence>
<evidence type="ECO:0000303" key="7">
    <source>
    </source>
</evidence>
<evidence type="ECO:0000305" key="8"/>
<evidence type="ECO:0000312" key="9">
    <source>
        <dbReference type="EMBL" id="AAH20197.1"/>
    </source>
</evidence>
<evidence type="ECO:0000312" key="10">
    <source>
        <dbReference type="EMBL" id="AAK11482.1"/>
    </source>
</evidence>
<evidence type="ECO:0000312" key="11">
    <source>
        <dbReference type="EMBL" id="BAB71541.1"/>
    </source>
</evidence>
<evidence type="ECO:0000312" key="12">
    <source>
        <dbReference type="EMBL" id="EAW68072.1"/>
    </source>
</evidence>
<dbReference type="EMBL" id="AY026508">
    <property type="protein sequence ID" value="AAK11482.1"/>
    <property type="molecule type" value="mRNA"/>
</dbReference>
<dbReference type="EMBL" id="AK057649">
    <property type="protein sequence ID" value="BAB71541.1"/>
    <property type="molecule type" value="mRNA"/>
</dbReference>
<dbReference type="EMBL" id="AK304074">
    <property type="protein sequence ID" value="BAG64981.1"/>
    <property type="molecule type" value="mRNA"/>
</dbReference>
<dbReference type="EMBL" id="AC134775">
    <property type="status" value="NOT_ANNOTATED_CDS"/>
    <property type="molecule type" value="Genomic_DNA"/>
</dbReference>
<dbReference type="EMBL" id="CH471064">
    <property type="protein sequence ID" value="EAW68072.1"/>
    <property type="molecule type" value="Genomic_DNA"/>
</dbReference>
<dbReference type="EMBL" id="BC020197">
    <property type="protein sequence ID" value="AAH20197.1"/>
    <property type="molecule type" value="mRNA"/>
</dbReference>
<dbReference type="CCDS" id="CCDS7907.1">
    <molecule id="Q96QU6-1"/>
</dbReference>
<dbReference type="RefSeq" id="NP_001120691.1">
    <molecule id="Q96QU6-1"/>
    <property type="nucleotide sequence ID" value="NM_001127219.2"/>
</dbReference>
<dbReference type="RefSeq" id="NP_115981.1">
    <molecule id="Q96QU6-1"/>
    <property type="nucleotide sequence ID" value="NM_032592.4"/>
</dbReference>
<dbReference type="SMR" id="Q96QU6"/>
<dbReference type="BioGRID" id="124199">
    <property type="interactions" value="11"/>
</dbReference>
<dbReference type="FunCoup" id="Q96QU6">
    <property type="interactions" value="36"/>
</dbReference>
<dbReference type="IntAct" id="Q96QU6">
    <property type="interactions" value="4"/>
</dbReference>
<dbReference type="MINT" id="Q96QU6"/>
<dbReference type="STRING" id="9606.ENSP00000263776"/>
<dbReference type="DrugBank" id="DB03214">
    <property type="generic name" value="Vinylglycine"/>
</dbReference>
<dbReference type="iPTMnet" id="Q96QU6"/>
<dbReference type="PhosphoSitePlus" id="Q96QU6"/>
<dbReference type="BioMuta" id="ACCS"/>
<dbReference type="DMDM" id="74717198"/>
<dbReference type="jPOST" id="Q96QU6"/>
<dbReference type="MassIVE" id="Q96QU6"/>
<dbReference type="PaxDb" id="9606-ENSP00000263776"/>
<dbReference type="PeptideAtlas" id="Q96QU6"/>
<dbReference type="ProteomicsDB" id="5797"/>
<dbReference type="ProteomicsDB" id="77907"/>
<dbReference type="Antibodypedia" id="13193">
    <property type="antibodies" value="204 antibodies from 26 providers"/>
</dbReference>
<dbReference type="DNASU" id="84680"/>
<dbReference type="Ensembl" id="ENST00000263776.9">
    <molecule id="Q96QU6-1"/>
    <property type="protein sequence ID" value="ENSP00000263776.8"/>
    <property type="gene ID" value="ENSG00000110455.14"/>
</dbReference>
<dbReference type="GeneID" id="84680"/>
<dbReference type="KEGG" id="hsa:84680"/>
<dbReference type="MANE-Select" id="ENST00000263776.9">
    <property type="protein sequence ID" value="ENSP00000263776.8"/>
    <property type="RefSeq nucleotide sequence ID" value="NM_032592.4"/>
    <property type="RefSeq protein sequence ID" value="NP_115981.1"/>
</dbReference>
<dbReference type="UCSC" id="uc001mxx.3">
    <molecule id="Q96QU6-1"/>
    <property type="organism name" value="human"/>
</dbReference>
<dbReference type="AGR" id="HGNC:23989"/>
<dbReference type="CTD" id="84680"/>
<dbReference type="DisGeNET" id="84680"/>
<dbReference type="GeneCards" id="ACCS"/>
<dbReference type="HGNC" id="HGNC:23989">
    <property type="gene designation" value="ACCS"/>
</dbReference>
<dbReference type="HPA" id="ENSG00000110455">
    <property type="expression patterns" value="Low tissue specificity"/>
</dbReference>
<dbReference type="MIM" id="608405">
    <property type="type" value="gene"/>
</dbReference>
<dbReference type="neXtProt" id="NX_Q96QU6"/>
<dbReference type="OpenTargets" id="ENSG00000110455"/>
<dbReference type="PharmGKB" id="PA162375284"/>
<dbReference type="VEuPathDB" id="HostDB:ENSG00000110455"/>
<dbReference type="eggNOG" id="KOG0256">
    <property type="taxonomic scope" value="Eukaryota"/>
</dbReference>
<dbReference type="GeneTree" id="ENSGT00940000161101"/>
<dbReference type="HOGENOM" id="CLU_017584_1_3_1"/>
<dbReference type="InParanoid" id="Q96QU6"/>
<dbReference type="OMA" id="PYYGTFV"/>
<dbReference type="OrthoDB" id="7042322at2759"/>
<dbReference type="PAN-GO" id="Q96QU6">
    <property type="GO annotations" value="2 GO annotations based on evolutionary models"/>
</dbReference>
<dbReference type="PhylomeDB" id="Q96QU6"/>
<dbReference type="TreeFam" id="TF354218"/>
<dbReference type="PathwayCommons" id="Q96QU6"/>
<dbReference type="SignaLink" id="Q96QU6"/>
<dbReference type="BioGRID-ORCS" id="84680">
    <property type="hits" value="8 hits in 1161 CRISPR screens"/>
</dbReference>
<dbReference type="ChiTaRS" id="ACCS">
    <property type="organism name" value="human"/>
</dbReference>
<dbReference type="GenomeRNAi" id="84680"/>
<dbReference type="Pharos" id="Q96QU6">
    <property type="development level" value="Tbio"/>
</dbReference>
<dbReference type="PRO" id="PR:Q96QU6"/>
<dbReference type="Proteomes" id="UP000005640">
    <property type="component" value="Chromosome 11"/>
</dbReference>
<dbReference type="RNAct" id="Q96QU6">
    <property type="molecule type" value="protein"/>
</dbReference>
<dbReference type="Bgee" id="ENSG00000110455">
    <property type="expression patterns" value="Expressed in right uterine tube and 120 other cell types or tissues"/>
</dbReference>
<dbReference type="ExpressionAtlas" id="Q96QU6">
    <property type="expression patterns" value="baseline and differential"/>
</dbReference>
<dbReference type="GO" id="GO:0042802">
    <property type="term" value="F:identical protein binding"/>
    <property type="evidence" value="ECO:0000353"/>
    <property type="project" value="IntAct"/>
</dbReference>
<dbReference type="GO" id="GO:0030170">
    <property type="term" value="F:pyridoxal phosphate binding"/>
    <property type="evidence" value="ECO:0000303"/>
    <property type="project" value="UniProtKB"/>
</dbReference>
<dbReference type="GO" id="GO:0008483">
    <property type="term" value="F:transaminase activity"/>
    <property type="evidence" value="ECO:0000318"/>
    <property type="project" value="GO_Central"/>
</dbReference>
<dbReference type="GO" id="GO:0006520">
    <property type="term" value="P:amino acid metabolic process"/>
    <property type="evidence" value="ECO:0000318"/>
    <property type="project" value="GO_Central"/>
</dbReference>
<dbReference type="GO" id="GO:0009058">
    <property type="term" value="P:biosynthetic process"/>
    <property type="evidence" value="ECO:0007669"/>
    <property type="project" value="InterPro"/>
</dbReference>
<dbReference type="CDD" id="cd00609">
    <property type="entry name" value="AAT_like"/>
    <property type="match status" value="1"/>
</dbReference>
<dbReference type="FunFam" id="3.40.640.10:FF:000102">
    <property type="entry name" value="1-aminocyclopropane-1-carboxylate synthase homolog (inactive)"/>
    <property type="match status" value="1"/>
</dbReference>
<dbReference type="Gene3D" id="3.90.1150.10">
    <property type="entry name" value="Aspartate Aminotransferase, domain 1"/>
    <property type="match status" value="1"/>
</dbReference>
<dbReference type="Gene3D" id="3.40.640.10">
    <property type="entry name" value="Type I PLP-dependent aspartate aminotransferase-like (Major domain)"/>
    <property type="match status" value="1"/>
</dbReference>
<dbReference type="InterPro" id="IPR004839">
    <property type="entry name" value="Aminotransferase_I/II_large"/>
</dbReference>
<dbReference type="InterPro" id="IPR050478">
    <property type="entry name" value="Ethylene_sulfur-biosynth"/>
</dbReference>
<dbReference type="InterPro" id="IPR015424">
    <property type="entry name" value="PyrdxlP-dep_Trfase"/>
</dbReference>
<dbReference type="InterPro" id="IPR015421">
    <property type="entry name" value="PyrdxlP-dep_Trfase_major"/>
</dbReference>
<dbReference type="InterPro" id="IPR015422">
    <property type="entry name" value="PyrdxlP-dep_Trfase_small"/>
</dbReference>
<dbReference type="PANTHER" id="PTHR43795:SF17">
    <property type="entry name" value="1-AMINOCYCLOPROPANE-1-CARBOXYLATE SYNTHASE-LIKE PROTEIN 1"/>
    <property type="match status" value="1"/>
</dbReference>
<dbReference type="PANTHER" id="PTHR43795">
    <property type="entry name" value="BIFUNCTIONAL ASPARTATE AMINOTRANSFERASE AND GLUTAMATE/ASPARTATE-PREPHENATE AMINOTRANSFERASE-RELATED"/>
    <property type="match status" value="1"/>
</dbReference>
<dbReference type="Pfam" id="PF00155">
    <property type="entry name" value="Aminotran_1_2"/>
    <property type="match status" value="1"/>
</dbReference>
<dbReference type="PRINTS" id="PR00753">
    <property type="entry name" value="ACCSYNTHASE"/>
</dbReference>
<dbReference type="SUPFAM" id="SSF53383">
    <property type="entry name" value="PLP-dependent transferases"/>
    <property type="match status" value="1"/>
</dbReference>
<sequence length="501" mass="57324">MFTLPQKDFRAPTTCLGPTCMQDLGSSHGEDLEGECSRKLDQKLPELRGVGDPAMISSDTSYLSSRGRMIKWFWDSAEEGYRTYHMDEYDEDKNPSGIINLGTSENKLCFDLLSWRLSQRDMQRVEPSLLQYADWRGHLFLREEVAKFLSFYCKSPVPLRPENVVVLNGGASLFSALATVLCEAGEAFLIPTPYYGAITQHVCLYGNIRLAYVYLDSEVTGLDTRPFQLTVEKLEMALREAHSEGVKVKGLILISPQNPLGDVYSPEELQEYLVFAKRHRLHVIVDEVYMLSVFEKSVGYRSVLSLERLPDPQRTHVMWATSKDFGMSGLRFGTLYTENQDVATAVASLCRYHGLSGLVQYQMAQLLRDRDWINQVYLPENHARLKAAHTYVSEELRALGIPFLSRGAGFFIWVDLRKYLPKGTFEEEMLLWRRFLDNKVLLSFGKAFECKEPGWFRFVFSDQVHRLCLGMQRVQQVLAGKSQVAEDPRPSQSQEPSDQRR</sequence>
<proteinExistence type="evidence at protein level"/>
<accession>Q96QU6</accession>
<accession>B4E219</accession>
<accession>Q8WUL4</accession>
<accession>Q96LX5</accession>
<keyword id="KW-0025">Alternative splicing</keyword>
<keyword id="KW-1267">Proteomics identification</keyword>
<keyword id="KW-0663">Pyridoxal phosphate</keyword>
<keyword id="KW-1185">Reference proteome</keyword>
<organism>
    <name type="scientific">Homo sapiens</name>
    <name type="common">Human</name>
    <dbReference type="NCBI Taxonomy" id="9606"/>
    <lineage>
        <taxon>Eukaryota</taxon>
        <taxon>Metazoa</taxon>
        <taxon>Chordata</taxon>
        <taxon>Craniata</taxon>
        <taxon>Vertebrata</taxon>
        <taxon>Euteleostomi</taxon>
        <taxon>Mammalia</taxon>
        <taxon>Eutheria</taxon>
        <taxon>Euarchontoglires</taxon>
        <taxon>Primates</taxon>
        <taxon>Haplorrhini</taxon>
        <taxon>Catarrhini</taxon>
        <taxon>Hominidae</taxon>
        <taxon>Homo</taxon>
    </lineage>
</organism>
<protein>
    <recommendedName>
        <fullName>1-aminocyclopropane-1-carboxylate synthase-like protein 1</fullName>
        <shortName>ACC synthase-like protein 1</shortName>
    </recommendedName>
</protein>
<reference evidence="8 10" key="1">
    <citation type="journal article" date="2001" name="Gene">
        <title>The human cDNA for a homologue of the plant enzyme 1-aminocyclopropane-1-carboxylate synthase encodes a protein lacking that activity.</title>
        <authorList>
            <person name="Koch K.A."/>
            <person name="Capitani G."/>
            <person name="Gruetter M.G."/>
            <person name="Kirsch J.F."/>
        </authorList>
    </citation>
    <scope>NUCLEOTIDE SEQUENCE [MRNA] (ISOFORM 1)</scope>
    <scope>FUNCTION</scope>
</reference>
<reference evidence="11" key="2">
    <citation type="journal article" date="2004" name="Nat. Genet.">
        <title>Complete sequencing and characterization of 21,243 full-length human cDNAs.</title>
        <authorList>
            <person name="Ota T."/>
            <person name="Suzuki Y."/>
            <person name="Nishikawa T."/>
            <person name="Otsuki T."/>
            <person name="Sugiyama T."/>
            <person name="Irie R."/>
            <person name="Wakamatsu A."/>
            <person name="Hayashi K."/>
            <person name="Sato H."/>
            <person name="Nagai K."/>
            <person name="Kimura K."/>
            <person name="Makita H."/>
            <person name="Sekine M."/>
            <person name="Obayashi M."/>
            <person name="Nishi T."/>
            <person name="Shibahara T."/>
            <person name="Tanaka T."/>
            <person name="Ishii S."/>
            <person name="Yamamoto J."/>
            <person name="Saito K."/>
            <person name="Kawai Y."/>
            <person name="Isono Y."/>
            <person name="Nakamura Y."/>
            <person name="Nagahari K."/>
            <person name="Murakami K."/>
            <person name="Yasuda T."/>
            <person name="Iwayanagi T."/>
            <person name="Wagatsuma M."/>
            <person name="Shiratori A."/>
            <person name="Sudo H."/>
            <person name="Hosoiri T."/>
            <person name="Kaku Y."/>
            <person name="Kodaira H."/>
            <person name="Kondo H."/>
            <person name="Sugawara M."/>
            <person name="Takahashi M."/>
            <person name="Kanda K."/>
            <person name="Yokoi T."/>
            <person name="Furuya T."/>
            <person name="Kikkawa E."/>
            <person name="Omura Y."/>
            <person name="Abe K."/>
            <person name="Kamihara K."/>
            <person name="Katsuta N."/>
            <person name="Sato K."/>
            <person name="Tanikawa M."/>
            <person name="Yamazaki M."/>
            <person name="Ninomiya K."/>
            <person name="Ishibashi T."/>
            <person name="Yamashita H."/>
            <person name="Murakawa K."/>
            <person name="Fujimori K."/>
            <person name="Tanai H."/>
            <person name="Kimata M."/>
            <person name="Watanabe M."/>
            <person name="Hiraoka S."/>
            <person name="Chiba Y."/>
            <person name="Ishida S."/>
            <person name="Ono Y."/>
            <person name="Takiguchi S."/>
            <person name="Watanabe S."/>
            <person name="Yosida M."/>
            <person name="Hotuta T."/>
            <person name="Kusano J."/>
            <person name="Kanehori K."/>
            <person name="Takahashi-Fujii A."/>
            <person name="Hara H."/>
            <person name="Tanase T.-O."/>
            <person name="Nomura Y."/>
            <person name="Togiya S."/>
            <person name="Komai F."/>
            <person name="Hara R."/>
            <person name="Takeuchi K."/>
            <person name="Arita M."/>
            <person name="Imose N."/>
            <person name="Musashino K."/>
            <person name="Yuuki H."/>
            <person name="Oshima A."/>
            <person name="Sasaki N."/>
            <person name="Aotsuka S."/>
            <person name="Yoshikawa Y."/>
            <person name="Matsunawa H."/>
            <person name="Ichihara T."/>
            <person name="Shiohata N."/>
            <person name="Sano S."/>
            <person name="Moriya S."/>
            <person name="Momiyama H."/>
            <person name="Satoh N."/>
            <person name="Takami S."/>
            <person name="Terashima Y."/>
            <person name="Suzuki O."/>
            <person name="Nakagawa S."/>
            <person name="Senoh A."/>
            <person name="Mizoguchi H."/>
            <person name="Goto Y."/>
            <person name="Shimizu F."/>
            <person name="Wakebe H."/>
            <person name="Hishigaki H."/>
            <person name="Watanabe T."/>
            <person name="Sugiyama A."/>
            <person name="Takemoto M."/>
            <person name="Kawakami B."/>
            <person name="Yamazaki M."/>
            <person name="Watanabe K."/>
            <person name="Kumagai A."/>
            <person name="Itakura S."/>
            <person name="Fukuzumi Y."/>
            <person name="Fujimori Y."/>
            <person name="Komiyama M."/>
            <person name="Tashiro H."/>
            <person name="Tanigami A."/>
            <person name="Fujiwara T."/>
            <person name="Ono T."/>
            <person name="Yamada K."/>
            <person name="Fujii Y."/>
            <person name="Ozaki K."/>
            <person name="Hirao M."/>
            <person name="Ohmori Y."/>
            <person name="Kawabata A."/>
            <person name="Hikiji T."/>
            <person name="Kobatake N."/>
            <person name="Inagaki H."/>
            <person name="Ikema Y."/>
            <person name="Okamoto S."/>
            <person name="Okitani R."/>
            <person name="Kawakami T."/>
            <person name="Noguchi S."/>
            <person name="Itoh T."/>
            <person name="Shigeta K."/>
            <person name="Senba T."/>
            <person name="Matsumura K."/>
            <person name="Nakajima Y."/>
            <person name="Mizuno T."/>
            <person name="Morinaga M."/>
            <person name="Sasaki M."/>
            <person name="Togashi T."/>
            <person name="Oyama M."/>
            <person name="Hata H."/>
            <person name="Watanabe M."/>
            <person name="Komatsu T."/>
            <person name="Mizushima-Sugano J."/>
            <person name="Satoh T."/>
            <person name="Shirai Y."/>
            <person name="Takahashi Y."/>
            <person name="Nakagawa K."/>
            <person name="Okumura K."/>
            <person name="Nagase T."/>
            <person name="Nomura N."/>
            <person name="Kikuchi H."/>
            <person name="Masuho Y."/>
            <person name="Yamashita R."/>
            <person name="Nakai K."/>
            <person name="Yada T."/>
            <person name="Nakamura Y."/>
            <person name="Ohara O."/>
            <person name="Isogai T."/>
            <person name="Sugano S."/>
        </authorList>
    </citation>
    <scope>NUCLEOTIDE SEQUENCE [LARGE SCALE MRNA] (ISOFORMS 1 AND 2)</scope>
    <source>
        <tissue evidence="11">Trachea</tissue>
    </source>
</reference>
<reference key="3">
    <citation type="journal article" date="2006" name="Nature">
        <title>Human chromosome 11 DNA sequence and analysis including novel gene identification.</title>
        <authorList>
            <person name="Taylor T.D."/>
            <person name="Noguchi H."/>
            <person name="Totoki Y."/>
            <person name="Toyoda A."/>
            <person name="Kuroki Y."/>
            <person name="Dewar K."/>
            <person name="Lloyd C."/>
            <person name="Itoh T."/>
            <person name="Takeda T."/>
            <person name="Kim D.-W."/>
            <person name="She X."/>
            <person name="Barlow K.F."/>
            <person name="Bloom T."/>
            <person name="Bruford E."/>
            <person name="Chang J.L."/>
            <person name="Cuomo C.A."/>
            <person name="Eichler E."/>
            <person name="FitzGerald M.G."/>
            <person name="Jaffe D.B."/>
            <person name="LaButti K."/>
            <person name="Nicol R."/>
            <person name="Park H.-S."/>
            <person name="Seaman C."/>
            <person name="Sougnez C."/>
            <person name="Yang X."/>
            <person name="Zimmer A.R."/>
            <person name="Zody M.C."/>
            <person name="Birren B.W."/>
            <person name="Nusbaum C."/>
            <person name="Fujiyama A."/>
            <person name="Hattori M."/>
            <person name="Rogers J."/>
            <person name="Lander E.S."/>
            <person name="Sakaki Y."/>
        </authorList>
    </citation>
    <scope>NUCLEOTIDE SEQUENCE [LARGE SCALE GENOMIC DNA]</scope>
</reference>
<reference evidence="12" key="4">
    <citation type="submission" date="2005-09" db="EMBL/GenBank/DDBJ databases">
        <authorList>
            <person name="Mural R.J."/>
            <person name="Istrail S."/>
            <person name="Sutton G.G."/>
            <person name="Florea L."/>
            <person name="Halpern A.L."/>
            <person name="Mobarry C.M."/>
            <person name="Lippert R."/>
            <person name="Walenz B."/>
            <person name="Shatkay H."/>
            <person name="Dew I."/>
            <person name="Miller J.R."/>
            <person name="Flanigan M.J."/>
            <person name="Edwards N.J."/>
            <person name="Bolanos R."/>
            <person name="Fasulo D."/>
            <person name="Halldorsson B.V."/>
            <person name="Hannenhalli S."/>
            <person name="Turner R."/>
            <person name="Yooseph S."/>
            <person name="Lu F."/>
            <person name="Nusskern D.R."/>
            <person name="Shue B.C."/>
            <person name="Zheng X.H."/>
            <person name="Zhong F."/>
            <person name="Delcher A.L."/>
            <person name="Huson D.H."/>
            <person name="Kravitz S.A."/>
            <person name="Mouchard L."/>
            <person name="Reinert K."/>
            <person name="Remington K.A."/>
            <person name="Clark A.G."/>
            <person name="Waterman M.S."/>
            <person name="Eichler E.E."/>
            <person name="Adams M.D."/>
            <person name="Hunkapiller M.W."/>
            <person name="Myers E.W."/>
            <person name="Venter J.C."/>
        </authorList>
    </citation>
    <scope>NUCLEOTIDE SEQUENCE [LARGE SCALE GENOMIC DNA]</scope>
</reference>
<reference evidence="8 9" key="5">
    <citation type="journal article" date="2004" name="Genome Res.">
        <title>The status, quality, and expansion of the NIH full-length cDNA project: the Mammalian Gene Collection (MGC).</title>
        <authorList>
            <consortium name="The MGC Project Team"/>
        </authorList>
    </citation>
    <scope>NUCLEOTIDE SEQUENCE [LARGE SCALE MRNA] (ISOFORM 1)</scope>
    <scope>VARIANT LEU-421</scope>
    <source>
        <tissue evidence="9">Uterus</tissue>
    </source>
</reference>
<reference evidence="8" key="6">
    <citation type="journal article" date="2006" name="Science">
        <title>The consensus coding sequences of human breast and colorectal cancers.</title>
        <authorList>
            <person name="Sjoeblom T."/>
            <person name="Jones S."/>
            <person name="Wood L.D."/>
            <person name="Parsons D.W."/>
            <person name="Lin J."/>
            <person name="Barber T.D."/>
            <person name="Mandelker D."/>
            <person name="Leary R.J."/>
            <person name="Ptak J."/>
            <person name="Silliman N."/>
            <person name="Szabo S."/>
            <person name="Buckhaults P."/>
            <person name="Farrell C."/>
            <person name="Meeh P."/>
            <person name="Markowitz S.D."/>
            <person name="Willis J."/>
            <person name="Dawson D."/>
            <person name="Willson J.K.V."/>
            <person name="Gazdar A.F."/>
            <person name="Hartigan J."/>
            <person name="Wu L."/>
            <person name="Liu C."/>
            <person name="Parmigiani G."/>
            <person name="Park B.H."/>
            <person name="Bachman K.E."/>
            <person name="Papadopoulos N."/>
            <person name="Vogelstein B."/>
            <person name="Kinzler K.W."/>
            <person name="Velculescu V.E."/>
        </authorList>
    </citation>
    <scope>VARIANTS [LARGE SCALE ANALYSIS] GLU-221 AND LEU-393</scope>
</reference>
<feature type="chain" id="PRO_0000318071" description="1-aminocyclopropane-1-carboxylate synthase-like protein 1">
    <location>
        <begin position="1"/>
        <end position="501"/>
    </location>
</feature>
<feature type="region of interest" description="Disordered" evidence="3">
    <location>
        <begin position="480"/>
        <end position="501"/>
    </location>
</feature>
<feature type="compositionally biased region" description="Polar residues" evidence="3">
    <location>
        <begin position="490"/>
        <end position="501"/>
    </location>
</feature>
<feature type="binding site" evidence="1">
    <location>
        <position position="105"/>
    </location>
    <ligand>
        <name>substrate</name>
    </ligand>
</feature>
<feature type="modified residue" description="N6-(pyridoxal phosphate)lysine" evidence="1">
    <location>
        <position position="323"/>
    </location>
</feature>
<feature type="splice variant" id="VSP_055800" description="In isoform 2." evidence="7">
    <original>LSQRDMQRVEPSLLQYADWRGHLFLREEVAKFLSFYCKSPVP</original>
    <variation>PPGGSGQVPVFLLQEPSTPQTRECGCPEWWCLALLCSGHGAV</variation>
    <location>
        <begin position="117"/>
        <end position="158"/>
    </location>
</feature>
<feature type="splice variant" id="VSP_055801" description="In isoform 2." evidence="7">
    <location>
        <begin position="159"/>
        <end position="501"/>
    </location>
</feature>
<feature type="sequence variant" id="VAR_048227" description="In dbSNP:rs33952257.">
    <original>D</original>
    <variation>N</variation>
    <location>
        <position position="59"/>
    </location>
</feature>
<feature type="sequence variant" id="VAR_048228" description="In dbSNP:rs2018795.">
    <original>D</original>
    <variation>E</variation>
    <location>
        <position position="134"/>
    </location>
</feature>
<feature type="sequence variant" id="VAR_038685" description="In a breast cancer sample; somatic mutation; dbSNP:rs35514614." evidence="6">
    <original>G</original>
    <variation>E</variation>
    <location>
        <position position="221"/>
    </location>
</feature>
<feature type="sequence variant" id="VAR_038686" description="In a breast cancer sample; somatic mutation." evidence="6">
    <original>S</original>
    <variation>L</variation>
    <location>
        <position position="393"/>
    </location>
</feature>
<feature type="sequence variant" id="VAR_038687" description="In dbSNP:rs3107275." evidence="5">
    <original>P</original>
    <variation>L</variation>
    <location>
        <position position="421"/>
    </location>
</feature>
<feature type="sequence conflict" description="In Ref. 2; BAB71541." evidence="8" ref="2">
    <original>N</original>
    <variation>S</variation>
    <location>
        <position position="94"/>
    </location>
</feature>
<feature type="sequence conflict" description="In Ref. 2; BAB71541." evidence="8" ref="2">
    <original>F</original>
    <variation>L</variation>
    <location>
        <position position="410"/>
    </location>
</feature>
<name>1A1L1_HUMAN</name>
<comment type="function">
    <text evidence="4">Does not catalyze the synthesis of 1-aminocyclopropane-1-carboxylate but is capable of catalyzing the deamination of L-vinylglycine.</text>
</comment>
<comment type="interaction">
    <interactant intactId="EBI-743387">
        <id>Q96QU6</id>
    </interactant>
    <interactant intactId="EBI-743387">
        <id>Q96QU6</id>
        <label>ACCS</label>
    </interactant>
    <organismsDiffer>false</organismsDiffer>
    <experiments>8</experiments>
</comment>
<comment type="interaction">
    <interactant intactId="EBI-743387">
        <id>Q96QU6</id>
    </interactant>
    <interactant intactId="EBI-349854">
        <id>P13569</id>
        <label>CFTR</label>
    </interactant>
    <organismsDiffer>false</organismsDiffer>
    <experiments>3</experiments>
</comment>
<comment type="interaction">
    <interactant intactId="EBI-743387">
        <id>Q96QU6</id>
    </interactant>
    <interactant intactId="EBI-743128">
        <id>P14927</id>
        <label>UQCRB</label>
    </interactant>
    <organismsDiffer>false</organismsDiffer>
    <experiments>3</experiments>
</comment>
<comment type="alternative products">
    <event type="alternative splicing"/>
    <isoform>
        <id>Q96QU6-1</id>
        <name>1</name>
        <sequence type="displayed"/>
    </isoform>
    <isoform>
        <id>Q96QU6-2</id>
        <name>2</name>
        <sequence type="described" ref="VSP_055800 VSP_055801"/>
    </isoform>
</comment>
<comment type="similarity">
    <text evidence="2">Belongs to the class-I pyridoxal-phosphate-dependent aminotransferase family.</text>
</comment>
<comment type="caution">
    <text evidence="4">Similar to plant 1-aminocyclopropane-1-carboxylate synthases but lacks a number of residues which are necessary for activity.</text>
</comment>
<gene>
    <name type="primary">ACCS</name>
    <name type="synonym">PHACS</name>
</gene>